<name>GSA_SHEPW</name>
<sequence length="429" mass="45759">MTRSDELFEQAKKTIPGGVNSPVRAFNGVGGSPRFIEKADGAYIFDADGKKYIDYVGSWGPMILGHNHPKIRAAVLEAVENGLSFGAPTELEVTMAEKVIEMVPSMEQVRMVSSGTEATMSAIRLARGFTSRDKILKFEGCYHGHADCLLVKAGSGALTLGQPSSPGIPEDFAKHTLTATYNDLDSVKALFEQYPDAISCIILEPVAGNMNCIPPVEGFLEGLRAICDQYGALMIIDEVMTGFRVSKSGAQGHYGVTPDLTTLGKVIGGGMPVGAFGGRKDVMQFIAPTGPVYQAGTLSGNPIAMSAGLAQMEALCEDGVYEQLAAKTQYIAEGFKAAANKHGIPMAINYVGGMFGFFFTDEEKVTSFEQVTKCDAEKFPEFYHGMLDEGVYLAPSAYEAGFLSLAHGEAELEATLAAAERVFAKMAKG</sequence>
<organism>
    <name type="scientific">Shewanella piezotolerans (strain WP3 / JCM 13877)</name>
    <dbReference type="NCBI Taxonomy" id="225849"/>
    <lineage>
        <taxon>Bacteria</taxon>
        <taxon>Pseudomonadati</taxon>
        <taxon>Pseudomonadota</taxon>
        <taxon>Gammaproteobacteria</taxon>
        <taxon>Alteromonadales</taxon>
        <taxon>Shewanellaceae</taxon>
        <taxon>Shewanella</taxon>
    </lineage>
</organism>
<keyword id="KW-0963">Cytoplasm</keyword>
<keyword id="KW-0413">Isomerase</keyword>
<keyword id="KW-0627">Porphyrin biosynthesis</keyword>
<keyword id="KW-0663">Pyridoxal phosphate</keyword>
<dbReference type="EC" id="5.4.3.8" evidence="1"/>
<dbReference type="EMBL" id="CP000472">
    <property type="protein sequence ID" value="ACJ27926.1"/>
    <property type="molecule type" value="Genomic_DNA"/>
</dbReference>
<dbReference type="RefSeq" id="WP_020911304.1">
    <property type="nucleotide sequence ID" value="NC_011566.1"/>
</dbReference>
<dbReference type="SMR" id="B8CJG4"/>
<dbReference type="STRING" id="225849.swp_1129"/>
<dbReference type="KEGG" id="swp:swp_1129"/>
<dbReference type="eggNOG" id="COG0001">
    <property type="taxonomic scope" value="Bacteria"/>
</dbReference>
<dbReference type="HOGENOM" id="CLU_016922_1_5_6"/>
<dbReference type="OrthoDB" id="9801052at2"/>
<dbReference type="UniPathway" id="UPA00251">
    <property type="reaction ID" value="UER00317"/>
</dbReference>
<dbReference type="Proteomes" id="UP000000753">
    <property type="component" value="Chromosome"/>
</dbReference>
<dbReference type="GO" id="GO:0005737">
    <property type="term" value="C:cytoplasm"/>
    <property type="evidence" value="ECO:0007669"/>
    <property type="project" value="UniProtKB-SubCell"/>
</dbReference>
<dbReference type="GO" id="GO:0042286">
    <property type="term" value="F:glutamate-1-semialdehyde 2,1-aminomutase activity"/>
    <property type="evidence" value="ECO:0007669"/>
    <property type="project" value="UniProtKB-UniRule"/>
</dbReference>
<dbReference type="GO" id="GO:0030170">
    <property type="term" value="F:pyridoxal phosphate binding"/>
    <property type="evidence" value="ECO:0007669"/>
    <property type="project" value="InterPro"/>
</dbReference>
<dbReference type="GO" id="GO:0008483">
    <property type="term" value="F:transaminase activity"/>
    <property type="evidence" value="ECO:0007669"/>
    <property type="project" value="InterPro"/>
</dbReference>
<dbReference type="GO" id="GO:0006782">
    <property type="term" value="P:protoporphyrinogen IX biosynthetic process"/>
    <property type="evidence" value="ECO:0007669"/>
    <property type="project" value="UniProtKB-UniRule"/>
</dbReference>
<dbReference type="CDD" id="cd00610">
    <property type="entry name" value="OAT_like"/>
    <property type="match status" value="1"/>
</dbReference>
<dbReference type="FunFam" id="3.40.640.10:FF:000021">
    <property type="entry name" value="Glutamate-1-semialdehyde 2,1-aminomutase"/>
    <property type="match status" value="1"/>
</dbReference>
<dbReference type="Gene3D" id="3.90.1150.10">
    <property type="entry name" value="Aspartate Aminotransferase, domain 1"/>
    <property type="match status" value="1"/>
</dbReference>
<dbReference type="Gene3D" id="3.40.640.10">
    <property type="entry name" value="Type I PLP-dependent aspartate aminotransferase-like (Major domain)"/>
    <property type="match status" value="1"/>
</dbReference>
<dbReference type="HAMAP" id="MF_00375">
    <property type="entry name" value="HemL_aminotrans_3"/>
    <property type="match status" value="1"/>
</dbReference>
<dbReference type="InterPro" id="IPR004639">
    <property type="entry name" value="4pyrrol_synth_GluAld_NH2Trfase"/>
</dbReference>
<dbReference type="InterPro" id="IPR005814">
    <property type="entry name" value="Aminotrans_3"/>
</dbReference>
<dbReference type="InterPro" id="IPR049704">
    <property type="entry name" value="Aminotrans_3_PPA_site"/>
</dbReference>
<dbReference type="InterPro" id="IPR015424">
    <property type="entry name" value="PyrdxlP-dep_Trfase"/>
</dbReference>
<dbReference type="InterPro" id="IPR015421">
    <property type="entry name" value="PyrdxlP-dep_Trfase_major"/>
</dbReference>
<dbReference type="InterPro" id="IPR015422">
    <property type="entry name" value="PyrdxlP-dep_Trfase_small"/>
</dbReference>
<dbReference type="NCBIfam" id="TIGR00713">
    <property type="entry name" value="hemL"/>
    <property type="match status" value="1"/>
</dbReference>
<dbReference type="NCBIfam" id="NF000818">
    <property type="entry name" value="PRK00062.1"/>
    <property type="match status" value="1"/>
</dbReference>
<dbReference type="PANTHER" id="PTHR43713">
    <property type="entry name" value="GLUTAMATE-1-SEMIALDEHYDE 2,1-AMINOMUTASE"/>
    <property type="match status" value="1"/>
</dbReference>
<dbReference type="PANTHER" id="PTHR43713:SF3">
    <property type="entry name" value="GLUTAMATE-1-SEMIALDEHYDE 2,1-AMINOMUTASE 1, CHLOROPLASTIC-RELATED"/>
    <property type="match status" value="1"/>
</dbReference>
<dbReference type="Pfam" id="PF00202">
    <property type="entry name" value="Aminotran_3"/>
    <property type="match status" value="1"/>
</dbReference>
<dbReference type="SUPFAM" id="SSF53383">
    <property type="entry name" value="PLP-dependent transferases"/>
    <property type="match status" value="1"/>
</dbReference>
<dbReference type="PROSITE" id="PS00600">
    <property type="entry name" value="AA_TRANSFER_CLASS_3"/>
    <property type="match status" value="1"/>
</dbReference>
<accession>B8CJG4</accession>
<proteinExistence type="inferred from homology"/>
<protein>
    <recommendedName>
        <fullName evidence="1">Glutamate-1-semialdehyde 2,1-aminomutase</fullName>
        <shortName evidence="1">GSA</shortName>
        <ecNumber evidence="1">5.4.3.8</ecNumber>
    </recommendedName>
    <alternativeName>
        <fullName evidence="1">Glutamate-1-semialdehyde aminotransferase</fullName>
        <shortName evidence="1">GSA-AT</shortName>
    </alternativeName>
</protein>
<reference key="1">
    <citation type="journal article" date="2008" name="PLoS ONE">
        <title>Environmental adaptation: genomic analysis of the piezotolerant and psychrotolerant deep-sea iron reducing bacterium Shewanella piezotolerans WP3.</title>
        <authorList>
            <person name="Wang F."/>
            <person name="Wang J."/>
            <person name="Jian H."/>
            <person name="Zhang B."/>
            <person name="Li S."/>
            <person name="Wang F."/>
            <person name="Zeng X."/>
            <person name="Gao L."/>
            <person name="Bartlett D.H."/>
            <person name="Yu J."/>
            <person name="Hu S."/>
            <person name="Xiao X."/>
        </authorList>
    </citation>
    <scope>NUCLEOTIDE SEQUENCE [LARGE SCALE GENOMIC DNA]</scope>
    <source>
        <strain>WP3 / JCM 13877</strain>
    </source>
</reference>
<comment type="catalytic activity">
    <reaction evidence="1">
        <text>(S)-4-amino-5-oxopentanoate = 5-aminolevulinate</text>
        <dbReference type="Rhea" id="RHEA:14265"/>
        <dbReference type="ChEBI" id="CHEBI:57501"/>
        <dbReference type="ChEBI" id="CHEBI:356416"/>
        <dbReference type="EC" id="5.4.3.8"/>
    </reaction>
</comment>
<comment type="cofactor">
    <cofactor evidence="1">
        <name>pyridoxal 5'-phosphate</name>
        <dbReference type="ChEBI" id="CHEBI:597326"/>
    </cofactor>
</comment>
<comment type="pathway">
    <text evidence="1">Porphyrin-containing compound metabolism; protoporphyrin-IX biosynthesis; 5-aminolevulinate from L-glutamyl-tRNA(Glu): step 2/2.</text>
</comment>
<comment type="subunit">
    <text evidence="1">Homodimer.</text>
</comment>
<comment type="subcellular location">
    <subcellularLocation>
        <location evidence="1">Cytoplasm</location>
    </subcellularLocation>
</comment>
<comment type="similarity">
    <text evidence="1">Belongs to the class-III pyridoxal-phosphate-dependent aminotransferase family. HemL subfamily.</text>
</comment>
<feature type="chain" id="PRO_1000121921" description="Glutamate-1-semialdehyde 2,1-aminomutase">
    <location>
        <begin position="1"/>
        <end position="429"/>
    </location>
</feature>
<feature type="modified residue" description="N6-(pyridoxal phosphate)lysine" evidence="1">
    <location>
        <position position="265"/>
    </location>
</feature>
<evidence type="ECO:0000255" key="1">
    <source>
        <dbReference type="HAMAP-Rule" id="MF_00375"/>
    </source>
</evidence>
<gene>
    <name evidence="1" type="primary">hemL</name>
    <name type="ordered locus">swp_1129</name>
</gene>